<accession>P37414</accession>
<sequence length="138" mass="15179">MKPAPGAEPVRMYKSPYGGKYGVWRLADCVPMRAKRPQTEKQRLASTRLGLQARMKSERGRFAMLAHTWLALGPVFLDTETTGLDAGAQALEIGLVNARGERIFETRLKPTVGIDPAAAAVQIVTEPYRFPVLSVRLA</sequence>
<organism>
    <name type="scientific">Salmonella typhimurium (strain LT2 / SGSC1412 / ATCC 700720)</name>
    <dbReference type="NCBI Taxonomy" id="99287"/>
    <lineage>
        <taxon>Bacteria</taxon>
        <taxon>Pseudomonadati</taxon>
        <taxon>Pseudomonadota</taxon>
        <taxon>Gammaproteobacteria</taxon>
        <taxon>Enterobacterales</taxon>
        <taxon>Enterobacteriaceae</taxon>
        <taxon>Salmonella</taxon>
    </lineage>
</organism>
<protein>
    <recommendedName>
        <fullName>Uncharacterized protein pSLT049</fullName>
    </recommendedName>
</protein>
<geneLocation type="plasmid">
    <name>pSLT</name>
</geneLocation>
<feature type="chain" id="PRO_0000066527" description="Uncharacterized protein pSLT049">
    <location>
        <begin position="1"/>
        <end position="138"/>
    </location>
</feature>
<keyword id="KW-0614">Plasmid</keyword>
<keyword id="KW-1185">Reference proteome</keyword>
<comment type="similarity">
    <text evidence="1">To phage 186 CP81.</text>
</comment>
<reference key="1">
    <citation type="submission" date="1994-01" db="EMBL/GenBank/DDBJ databases">
        <authorList>
            <person name="Taira S."/>
            <person name="Hurme R."/>
            <person name="Heiskanen P."/>
            <person name="Heikkila H."/>
            <person name="Rhen M."/>
        </authorList>
    </citation>
    <scope>NUCLEOTIDE SEQUENCE [GENOMIC DNA]</scope>
    <source>
        <strain>LT2</strain>
    </source>
</reference>
<reference key="2">
    <citation type="journal article" date="2001" name="Nature">
        <title>Complete genome sequence of Salmonella enterica serovar Typhimurium LT2.</title>
        <authorList>
            <person name="McClelland M."/>
            <person name="Sanderson K.E."/>
            <person name="Spieth J."/>
            <person name="Clifton S.W."/>
            <person name="Latreille P."/>
            <person name="Courtney L."/>
            <person name="Porwollik S."/>
            <person name="Ali J."/>
            <person name="Dante M."/>
            <person name="Du F."/>
            <person name="Hou S."/>
            <person name="Layman D."/>
            <person name="Leonard S."/>
            <person name="Nguyen C."/>
            <person name="Scott K."/>
            <person name="Holmes A."/>
            <person name="Grewal N."/>
            <person name="Mulvaney E."/>
            <person name="Ryan E."/>
            <person name="Sun H."/>
            <person name="Florea L."/>
            <person name="Miller W."/>
            <person name="Stoneking T."/>
            <person name="Nhan M."/>
            <person name="Waterston R."/>
            <person name="Wilson R.K."/>
        </authorList>
    </citation>
    <scope>NUCLEOTIDE SEQUENCE [LARGE SCALE GENOMIC DNA]</scope>
    <source>
        <strain>LT2 / SGSC1412 / ATCC 700720</strain>
    </source>
</reference>
<evidence type="ECO:0000305" key="1"/>
<dbReference type="EMBL" id="Z29513">
    <property type="protein sequence ID" value="CAA82633.1"/>
    <property type="molecule type" value="Genomic_DNA"/>
</dbReference>
<dbReference type="EMBL" id="AE006471">
    <property type="protein sequence ID" value="AAL23463.1"/>
    <property type="molecule type" value="Genomic_DNA"/>
</dbReference>
<dbReference type="PIR" id="S41384">
    <property type="entry name" value="S41384"/>
</dbReference>
<dbReference type="RefSeq" id="NP_490539.1">
    <property type="nucleotide sequence ID" value="NC_003277.2"/>
</dbReference>
<dbReference type="RefSeq" id="WP_001541564.1">
    <property type="nucleotide sequence ID" value="NC_003277.2"/>
</dbReference>
<dbReference type="SMR" id="P37414"/>
<dbReference type="GeneID" id="1256189"/>
<dbReference type="KEGG" id="stm:PSLT049"/>
<dbReference type="HOGENOM" id="CLU_082684_1_0_6"/>
<dbReference type="OMA" id="RAEDKCY"/>
<dbReference type="BioCyc" id="SENT99287:PSLT049-MONOMER"/>
<dbReference type="Proteomes" id="UP000001014">
    <property type="component" value="Plasmid pSLT"/>
</dbReference>
<dbReference type="GO" id="GO:0003676">
    <property type="term" value="F:nucleic acid binding"/>
    <property type="evidence" value="ECO:0007669"/>
    <property type="project" value="InterPro"/>
</dbReference>
<dbReference type="Gene3D" id="3.30.420.10">
    <property type="entry name" value="Ribonuclease H-like superfamily/Ribonuclease H"/>
    <property type="match status" value="1"/>
</dbReference>
<dbReference type="InterPro" id="IPR012337">
    <property type="entry name" value="RNaseH-like_sf"/>
</dbReference>
<dbReference type="InterPro" id="IPR036397">
    <property type="entry name" value="RNaseH_sf"/>
</dbReference>
<dbReference type="SUPFAM" id="SSF53098">
    <property type="entry name" value="Ribonuclease H-like"/>
    <property type="match status" value="1"/>
</dbReference>
<proteinExistence type="predicted"/>
<name>YTL1_SALTY</name>
<gene>
    <name type="ordered locus">PSLT049</name>
</gene>